<protein>
    <recommendedName>
        <fullName evidence="1">Non-specific ribonucleoside hydrolase RihC</fullName>
        <ecNumber evidence="1">3.2.-.-</ecNumber>
    </recommendedName>
    <alternativeName>
        <fullName evidence="1">Purine/pyrimidine ribonucleoside hydrolase</fullName>
    </alternativeName>
</protein>
<accession>Q326J3</accession>
<gene>
    <name evidence="1" type="primary">rihC</name>
    <name type="ordered locus">SBO_0029</name>
</gene>
<name>RIHC_SHIBS</name>
<reference key="1">
    <citation type="journal article" date="2005" name="Nucleic Acids Res.">
        <title>Genome dynamics and diversity of Shigella species, the etiologic agents of bacillary dysentery.</title>
        <authorList>
            <person name="Yang F."/>
            <person name="Yang J."/>
            <person name="Zhang X."/>
            <person name="Chen L."/>
            <person name="Jiang Y."/>
            <person name="Yan Y."/>
            <person name="Tang X."/>
            <person name="Wang J."/>
            <person name="Xiong Z."/>
            <person name="Dong J."/>
            <person name="Xue Y."/>
            <person name="Zhu Y."/>
            <person name="Xu X."/>
            <person name="Sun L."/>
            <person name="Chen S."/>
            <person name="Nie H."/>
            <person name="Peng J."/>
            <person name="Xu J."/>
            <person name="Wang Y."/>
            <person name="Yuan Z."/>
            <person name="Wen Y."/>
            <person name="Yao Z."/>
            <person name="Shen Y."/>
            <person name="Qiang B."/>
            <person name="Hou Y."/>
            <person name="Yu J."/>
            <person name="Jin Q."/>
        </authorList>
    </citation>
    <scope>NUCLEOTIDE SEQUENCE [LARGE SCALE GENOMIC DNA]</scope>
    <source>
        <strain>Sb227</strain>
    </source>
</reference>
<evidence type="ECO:0000255" key="1">
    <source>
        <dbReference type="HAMAP-Rule" id="MF_01432"/>
    </source>
</evidence>
<keyword id="KW-0326">Glycosidase</keyword>
<keyword id="KW-0378">Hydrolase</keyword>
<organism>
    <name type="scientific">Shigella boydii serotype 4 (strain Sb227)</name>
    <dbReference type="NCBI Taxonomy" id="300268"/>
    <lineage>
        <taxon>Bacteria</taxon>
        <taxon>Pseudomonadati</taxon>
        <taxon>Pseudomonadota</taxon>
        <taxon>Gammaproteobacteria</taxon>
        <taxon>Enterobacterales</taxon>
        <taxon>Enterobacteriaceae</taxon>
        <taxon>Shigella</taxon>
    </lineage>
</organism>
<sequence length="304" mass="32525">MHLPIFLDTDPGIDDAVAIAAAIFAPELDLQLMTTVAGNVSVEKTTRNALQLLHFWNAEIPLAQGAAVPLVRAPRDAASVHGESGMAGYDFVEHNRKPLGIPAFLAIRDALMRAPEPVTLVAIGPLTNIALLLSQCPECKPYIRRLVIMGGSAGRGNCTPNAEFNIAADPEAAACVFRSGIEIVMSGLDVTNQAILTPDYLATLPELNRTGKMLHALFSHYRSGSMQSGLRMHDLCAIAWLVRPELFTLKPCFVAVETQGEFTSGTTVVDIDGCLGKPANVKVALDLDVKGFQQWVAEVLALAS</sequence>
<comment type="function">
    <text evidence="1">Hydrolyzes both purine and pyrimidine ribonucleosides with a broad-substrate specificity.</text>
</comment>
<comment type="similarity">
    <text evidence="1">Belongs to the IUNH family. RihC subfamily.</text>
</comment>
<dbReference type="EC" id="3.2.-.-" evidence="1"/>
<dbReference type="EMBL" id="CP000036">
    <property type="protein sequence ID" value="ABB64765.1"/>
    <property type="molecule type" value="Genomic_DNA"/>
</dbReference>
<dbReference type="RefSeq" id="WP_000550596.1">
    <property type="nucleotide sequence ID" value="NC_007613.1"/>
</dbReference>
<dbReference type="SMR" id="Q326J3"/>
<dbReference type="KEGG" id="sbo:SBO_0029"/>
<dbReference type="HOGENOM" id="CLU_036838_2_2_6"/>
<dbReference type="Proteomes" id="UP000007067">
    <property type="component" value="Chromosome"/>
</dbReference>
<dbReference type="GO" id="GO:0005829">
    <property type="term" value="C:cytosol"/>
    <property type="evidence" value="ECO:0007669"/>
    <property type="project" value="TreeGrafter"/>
</dbReference>
<dbReference type="GO" id="GO:0008477">
    <property type="term" value="F:purine nucleosidase activity"/>
    <property type="evidence" value="ECO:0007669"/>
    <property type="project" value="TreeGrafter"/>
</dbReference>
<dbReference type="GO" id="GO:0045437">
    <property type="term" value="F:uridine nucleosidase activity"/>
    <property type="evidence" value="ECO:0007669"/>
    <property type="project" value="UniProtKB-ARBA"/>
</dbReference>
<dbReference type="GO" id="GO:0006144">
    <property type="term" value="P:purine nucleobase metabolic process"/>
    <property type="evidence" value="ECO:0007669"/>
    <property type="project" value="UniProtKB-UniRule"/>
</dbReference>
<dbReference type="GO" id="GO:0006152">
    <property type="term" value="P:purine nucleoside catabolic process"/>
    <property type="evidence" value="ECO:0007669"/>
    <property type="project" value="TreeGrafter"/>
</dbReference>
<dbReference type="GO" id="GO:0006206">
    <property type="term" value="P:pyrimidine nucleobase metabolic process"/>
    <property type="evidence" value="ECO:0007669"/>
    <property type="project" value="UniProtKB-UniRule"/>
</dbReference>
<dbReference type="CDD" id="cd02651">
    <property type="entry name" value="nuc_hydro_IU_UC_XIUA"/>
    <property type="match status" value="1"/>
</dbReference>
<dbReference type="FunFam" id="3.90.245.10:FF:000002">
    <property type="entry name" value="Non-specific ribonucleoside hydrolase RihC"/>
    <property type="match status" value="1"/>
</dbReference>
<dbReference type="Gene3D" id="3.90.245.10">
    <property type="entry name" value="Ribonucleoside hydrolase-like"/>
    <property type="match status" value="1"/>
</dbReference>
<dbReference type="HAMAP" id="MF_01432">
    <property type="entry name" value="Nucleosid_hydro_RihC"/>
    <property type="match status" value="1"/>
</dbReference>
<dbReference type="InterPro" id="IPR015910">
    <property type="entry name" value="I/U_nuclsd_hydro_CS"/>
</dbReference>
<dbReference type="InterPro" id="IPR001910">
    <property type="entry name" value="Inosine/uridine_hydrolase_dom"/>
</dbReference>
<dbReference type="InterPro" id="IPR023186">
    <property type="entry name" value="IUNH"/>
</dbReference>
<dbReference type="InterPro" id="IPR022976">
    <property type="entry name" value="Nucleosid_hydro_RihC_nonspecif"/>
</dbReference>
<dbReference type="InterPro" id="IPR036452">
    <property type="entry name" value="Ribo_hydro-like"/>
</dbReference>
<dbReference type="NCBIfam" id="NF008036">
    <property type="entry name" value="PRK10768.1"/>
    <property type="match status" value="1"/>
</dbReference>
<dbReference type="PANTHER" id="PTHR12304">
    <property type="entry name" value="INOSINE-URIDINE PREFERRING NUCLEOSIDE HYDROLASE"/>
    <property type="match status" value="1"/>
</dbReference>
<dbReference type="PANTHER" id="PTHR12304:SF15">
    <property type="entry name" value="NON-SPECIFIC RIBONUCLEOSIDE HYDROLASE RIHC"/>
    <property type="match status" value="1"/>
</dbReference>
<dbReference type="Pfam" id="PF01156">
    <property type="entry name" value="IU_nuc_hydro"/>
    <property type="match status" value="1"/>
</dbReference>
<dbReference type="SUPFAM" id="SSF53590">
    <property type="entry name" value="Nucleoside hydrolase"/>
    <property type="match status" value="1"/>
</dbReference>
<dbReference type="PROSITE" id="PS01247">
    <property type="entry name" value="IUNH"/>
    <property type="match status" value="1"/>
</dbReference>
<proteinExistence type="inferred from homology"/>
<feature type="chain" id="PRO_1000024408" description="Non-specific ribonucleoside hydrolase RihC">
    <location>
        <begin position="1"/>
        <end position="304"/>
    </location>
</feature>
<feature type="active site" evidence="1">
    <location>
        <position position="233"/>
    </location>
</feature>